<keyword id="KW-0145">Chemotaxis</keyword>
<keyword id="KW-0378">Hydrolase</keyword>
<keyword id="KW-1185">Reference proteome</keyword>
<organism>
    <name type="scientific">Borreliella burgdorferi (strain ATCC 35210 / DSM 4680 / CIP 102532 / B31)</name>
    <name type="common">Borrelia burgdorferi</name>
    <dbReference type="NCBI Taxonomy" id="224326"/>
    <lineage>
        <taxon>Bacteria</taxon>
        <taxon>Pseudomonadati</taxon>
        <taxon>Spirochaetota</taxon>
        <taxon>Spirochaetia</taxon>
        <taxon>Spirochaetales</taxon>
        <taxon>Borreliaceae</taxon>
        <taxon>Borreliella</taxon>
    </lineage>
</organism>
<name>CHED_BORBU</name>
<evidence type="ECO:0000255" key="1">
    <source>
        <dbReference type="HAMAP-Rule" id="MF_01440"/>
    </source>
</evidence>
<gene>
    <name evidence="1" type="primary">cheD</name>
    <name type="ordered locus">BB_0606</name>
</gene>
<reference key="1">
    <citation type="journal article" date="1997" name="Nature">
        <title>Genomic sequence of a Lyme disease spirochaete, Borrelia burgdorferi.</title>
        <authorList>
            <person name="Fraser C.M."/>
            <person name="Casjens S."/>
            <person name="Huang W.M."/>
            <person name="Sutton G.G."/>
            <person name="Clayton R.A."/>
            <person name="Lathigra R."/>
            <person name="White O."/>
            <person name="Ketchum K.A."/>
            <person name="Dodson R.J."/>
            <person name="Hickey E.K."/>
            <person name="Gwinn M.L."/>
            <person name="Dougherty B.A."/>
            <person name="Tomb J.-F."/>
            <person name="Fleischmann R.D."/>
            <person name="Richardson D.L."/>
            <person name="Peterson J.D."/>
            <person name="Kerlavage A.R."/>
            <person name="Quackenbush J."/>
            <person name="Salzberg S.L."/>
            <person name="Hanson M."/>
            <person name="van Vugt R."/>
            <person name="Palmer N."/>
            <person name="Adams M.D."/>
            <person name="Gocayne J.D."/>
            <person name="Weidman J.F."/>
            <person name="Utterback T.R."/>
            <person name="Watthey L."/>
            <person name="McDonald L.A."/>
            <person name="Artiach P."/>
            <person name="Bowman C."/>
            <person name="Garland S.A."/>
            <person name="Fujii C."/>
            <person name="Cotton M.D."/>
            <person name="Horst K."/>
            <person name="Roberts K.M."/>
            <person name="Hatch B."/>
            <person name="Smith H.O."/>
            <person name="Venter J.C."/>
        </authorList>
    </citation>
    <scope>NUCLEOTIDE SEQUENCE [LARGE SCALE GENOMIC DNA]</scope>
    <source>
        <strain>ATCC 35210 / DSM 4680 / CIP 102532 / B31</strain>
    </source>
</reference>
<proteinExistence type="inferred from homology"/>
<accession>O51551</accession>
<feature type="chain" id="PRO_0000251010" description="Probable chemoreceptor glutamine deamidase CheD">
    <location>
        <begin position="1"/>
        <end position="163"/>
    </location>
</feature>
<protein>
    <recommendedName>
        <fullName evidence="1">Probable chemoreceptor glutamine deamidase CheD</fullName>
        <ecNumber evidence="1">3.5.1.44</ecNumber>
    </recommendedName>
</protein>
<dbReference type="EC" id="3.5.1.44" evidence="1"/>
<dbReference type="EMBL" id="AE000783">
    <property type="protein sequence ID" value="AAC66968.1"/>
    <property type="molecule type" value="Genomic_DNA"/>
</dbReference>
<dbReference type="PIR" id="E70175">
    <property type="entry name" value="E70175"/>
</dbReference>
<dbReference type="RefSeq" id="NP_212740.1">
    <property type="nucleotide sequence ID" value="NC_001318.1"/>
</dbReference>
<dbReference type="RefSeq" id="WP_002658115.1">
    <property type="nucleotide sequence ID" value="NC_001318.1"/>
</dbReference>
<dbReference type="SMR" id="O51551"/>
<dbReference type="STRING" id="224326.BB_0606"/>
<dbReference type="PaxDb" id="224326-BB_0606"/>
<dbReference type="EnsemblBacteria" id="AAC66968">
    <property type="protein sequence ID" value="AAC66968"/>
    <property type="gene ID" value="BB_0606"/>
</dbReference>
<dbReference type="GeneID" id="56568039"/>
<dbReference type="KEGG" id="bbu:BB_0606"/>
<dbReference type="PATRIC" id="fig|224326.49.peg.997"/>
<dbReference type="HOGENOM" id="CLU_087854_0_0_12"/>
<dbReference type="OrthoDB" id="9807202at2"/>
<dbReference type="Proteomes" id="UP000001807">
    <property type="component" value="Chromosome"/>
</dbReference>
<dbReference type="GO" id="GO:0050568">
    <property type="term" value="F:protein-glutamine glutaminase activity"/>
    <property type="evidence" value="ECO:0007669"/>
    <property type="project" value="UniProtKB-UniRule"/>
</dbReference>
<dbReference type="GO" id="GO:0006935">
    <property type="term" value="P:chemotaxis"/>
    <property type="evidence" value="ECO:0007669"/>
    <property type="project" value="UniProtKB-UniRule"/>
</dbReference>
<dbReference type="CDD" id="cd16352">
    <property type="entry name" value="CheD"/>
    <property type="match status" value="1"/>
</dbReference>
<dbReference type="Gene3D" id="3.30.1330.200">
    <property type="match status" value="1"/>
</dbReference>
<dbReference type="HAMAP" id="MF_01440">
    <property type="entry name" value="CheD"/>
    <property type="match status" value="1"/>
</dbReference>
<dbReference type="InterPro" id="IPR038592">
    <property type="entry name" value="CheD-like_sf"/>
</dbReference>
<dbReference type="InterPro" id="IPR005659">
    <property type="entry name" value="Chemorcpt_Glu_NH3ase_CheD"/>
</dbReference>
<dbReference type="InterPro" id="IPR011324">
    <property type="entry name" value="Cytotoxic_necrot_fac-like_cat"/>
</dbReference>
<dbReference type="NCBIfam" id="NF010017">
    <property type="entry name" value="PRK13494.1"/>
    <property type="match status" value="1"/>
</dbReference>
<dbReference type="PANTHER" id="PTHR35147">
    <property type="entry name" value="CHEMORECEPTOR GLUTAMINE DEAMIDASE CHED-RELATED"/>
    <property type="match status" value="1"/>
</dbReference>
<dbReference type="PANTHER" id="PTHR35147:SF2">
    <property type="entry name" value="CHEMORECEPTOR GLUTAMINE DEAMIDASE CHED-RELATED"/>
    <property type="match status" value="1"/>
</dbReference>
<dbReference type="Pfam" id="PF03975">
    <property type="entry name" value="CheD"/>
    <property type="match status" value="1"/>
</dbReference>
<dbReference type="SUPFAM" id="SSF64438">
    <property type="entry name" value="CNF1/YfiH-like putative cysteine hydrolases"/>
    <property type="match status" value="1"/>
</dbReference>
<comment type="function">
    <text evidence="1">Probably deamidates glutamine residues to glutamate on methyl-accepting chemotaxis receptors (MCPs), playing an important role in chemotaxis.</text>
</comment>
<comment type="catalytic activity">
    <reaction evidence="1">
        <text>L-glutaminyl-[protein] + H2O = L-glutamyl-[protein] + NH4(+)</text>
        <dbReference type="Rhea" id="RHEA:16441"/>
        <dbReference type="Rhea" id="RHEA-COMP:10207"/>
        <dbReference type="Rhea" id="RHEA-COMP:10208"/>
        <dbReference type="ChEBI" id="CHEBI:15377"/>
        <dbReference type="ChEBI" id="CHEBI:28938"/>
        <dbReference type="ChEBI" id="CHEBI:29973"/>
        <dbReference type="ChEBI" id="CHEBI:30011"/>
        <dbReference type="EC" id="3.5.1.44"/>
    </reaction>
</comment>
<comment type="similarity">
    <text evidence="1">Belongs to the CheD family.</text>
</comment>
<sequence length="163" mass="18141">MLNHFNFKLKRDVTIIVPGEAFVSNKRVISTILGSCVAVVLCDESNNLIGMNHYVLVKSDLDISPDQRGRYGIYAIPMLINAMLENGASKSNLKAKLFGGTNFMAKGSVKVGLENSEFAVNTLNKYRIPILAKDFDQSKSRKIFAFPENFKVIVEYPDGTKVF</sequence>